<gene>
    <name evidence="1" type="primary">rutB</name>
    <name type="ordered locus">EC042_1086</name>
</gene>
<name>RUTB_ECO44</name>
<proteinExistence type="inferred from homology"/>
<accession>D3H124</accession>
<dbReference type="EC" id="3.5.1.110" evidence="1"/>
<dbReference type="EMBL" id="FN554766">
    <property type="protein sequence ID" value="CBG33908.1"/>
    <property type="molecule type" value="Genomic_DNA"/>
</dbReference>
<dbReference type="RefSeq" id="WP_001446784.1">
    <property type="nucleotide sequence ID" value="NC_017626.1"/>
</dbReference>
<dbReference type="SMR" id="D3H124"/>
<dbReference type="KEGG" id="elo:EC042_1086"/>
<dbReference type="PATRIC" id="fig|216592.3.peg.1124"/>
<dbReference type="HOGENOM" id="CLU_068979_8_0_6"/>
<dbReference type="Proteomes" id="UP000001407">
    <property type="component" value="Chromosome"/>
</dbReference>
<dbReference type="GO" id="GO:0016811">
    <property type="term" value="F:hydrolase activity, acting on carbon-nitrogen (but not peptide) bonds, in linear amides"/>
    <property type="evidence" value="ECO:0007669"/>
    <property type="project" value="UniProtKB-UniRule"/>
</dbReference>
<dbReference type="GO" id="GO:0019740">
    <property type="term" value="P:nitrogen utilization"/>
    <property type="evidence" value="ECO:0007669"/>
    <property type="project" value="UniProtKB-UniRule"/>
</dbReference>
<dbReference type="GO" id="GO:0006212">
    <property type="term" value="P:uracil catabolic process"/>
    <property type="evidence" value="ECO:0007669"/>
    <property type="project" value="UniProtKB-UniRule"/>
</dbReference>
<dbReference type="CDD" id="cd00431">
    <property type="entry name" value="cysteine_hydrolases"/>
    <property type="match status" value="1"/>
</dbReference>
<dbReference type="FunFam" id="3.40.50.850:FF:000004">
    <property type="entry name" value="Peroxyureidoacrylate/ureidoacrylate amidohydrolase RutB"/>
    <property type="match status" value="1"/>
</dbReference>
<dbReference type="Gene3D" id="3.40.50.850">
    <property type="entry name" value="Isochorismatase-like"/>
    <property type="match status" value="1"/>
</dbReference>
<dbReference type="HAMAP" id="MF_00830">
    <property type="entry name" value="RutB"/>
    <property type="match status" value="1"/>
</dbReference>
<dbReference type="InterPro" id="IPR000868">
    <property type="entry name" value="Isochorismatase-like_dom"/>
</dbReference>
<dbReference type="InterPro" id="IPR050272">
    <property type="entry name" value="Isochorismatase-like_hydrls"/>
</dbReference>
<dbReference type="InterPro" id="IPR036380">
    <property type="entry name" value="Isochorismatase-like_sf"/>
</dbReference>
<dbReference type="InterPro" id="IPR019916">
    <property type="entry name" value="RutB"/>
</dbReference>
<dbReference type="NCBIfam" id="TIGR03614">
    <property type="entry name" value="RutB"/>
    <property type="match status" value="1"/>
</dbReference>
<dbReference type="PANTHER" id="PTHR43540:SF6">
    <property type="entry name" value="ISOCHORISMATASE-LIKE DOMAIN-CONTAINING PROTEIN"/>
    <property type="match status" value="1"/>
</dbReference>
<dbReference type="PANTHER" id="PTHR43540">
    <property type="entry name" value="PEROXYUREIDOACRYLATE/UREIDOACRYLATE AMIDOHYDROLASE-RELATED"/>
    <property type="match status" value="1"/>
</dbReference>
<dbReference type="Pfam" id="PF00857">
    <property type="entry name" value="Isochorismatase"/>
    <property type="match status" value="1"/>
</dbReference>
<dbReference type="SUPFAM" id="SSF52499">
    <property type="entry name" value="Isochorismatase-like hydrolases"/>
    <property type="match status" value="1"/>
</dbReference>
<reference key="1">
    <citation type="journal article" date="2010" name="PLoS ONE">
        <title>Complete genome sequence and comparative metabolic profiling of the prototypical enteroaggregative Escherichia coli strain 042.</title>
        <authorList>
            <person name="Chaudhuri R.R."/>
            <person name="Sebaihia M."/>
            <person name="Hobman J.L."/>
            <person name="Webber M.A."/>
            <person name="Leyton D.L."/>
            <person name="Goldberg M.D."/>
            <person name="Cunningham A.F."/>
            <person name="Scott-Tucker A."/>
            <person name="Ferguson P.R."/>
            <person name="Thomas C.M."/>
            <person name="Frankel G."/>
            <person name="Tang C.M."/>
            <person name="Dudley E.G."/>
            <person name="Roberts I.S."/>
            <person name="Rasko D.A."/>
            <person name="Pallen M.J."/>
            <person name="Parkhill J."/>
            <person name="Nataro J.P."/>
            <person name="Thomson N.R."/>
            <person name="Henderson I.R."/>
        </authorList>
    </citation>
    <scope>NUCLEOTIDE SEQUENCE [LARGE SCALE GENOMIC DNA]</scope>
    <source>
        <strain>042 / EAEC</strain>
    </source>
</reference>
<organism>
    <name type="scientific">Escherichia coli O44:H18 (strain 042 / EAEC)</name>
    <dbReference type="NCBI Taxonomy" id="216592"/>
    <lineage>
        <taxon>Bacteria</taxon>
        <taxon>Pseudomonadati</taxon>
        <taxon>Pseudomonadota</taxon>
        <taxon>Gammaproteobacteria</taxon>
        <taxon>Enterobacterales</taxon>
        <taxon>Enterobacteriaceae</taxon>
        <taxon>Escherichia</taxon>
    </lineage>
</organism>
<evidence type="ECO:0000255" key="1">
    <source>
        <dbReference type="HAMAP-Rule" id="MF_00830"/>
    </source>
</evidence>
<comment type="function">
    <text evidence="1">Hydrolyzes ureidoacrylate to form aminoacrylate and carbamate. The carbamate hydrolyzes spontaneously, thereby releasing one of the nitrogen atoms of the pyrimidine ring as ammonia and one of its carbon atoms as CO2.</text>
</comment>
<comment type="catalytic activity">
    <reaction evidence="1">
        <text>(Z)-3-ureidoacrylate + H2O + H(+) = (Z)-3-aminoacrylate + NH4(+) + CO2</text>
        <dbReference type="Rhea" id="RHEA:42624"/>
        <dbReference type="ChEBI" id="CHEBI:15377"/>
        <dbReference type="ChEBI" id="CHEBI:15378"/>
        <dbReference type="ChEBI" id="CHEBI:16526"/>
        <dbReference type="ChEBI" id="CHEBI:28938"/>
        <dbReference type="ChEBI" id="CHEBI:59891"/>
        <dbReference type="ChEBI" id="CHEBI:59894"/>
        <dbReference type="EC" id="3.5.1.110"/>
    </reaction>
</comment>
<comment type="catalytic activity">
    <reaction evidence="1">
        <text>(Z)-3-ureidoacrylate + H2O = (Z)-3-aminoacrylate + carbamate + H(+)</text>
        <dbReference type="Rhea" id="RHEA:31603"/>
        <dbReference type="ChEBI" id="CHEBI:13941"/>
        <dbReference type="ChEBI" id="CHEBI:15377"/>
        <dbReference type="ChEBI" id="CHEBI:15378"/>
        <dbReference type="ChEBI" id="CHEBI:59891"/>
        <dbReference type="ChEBI" id="CHEBI:59894"/>
    </reaction>
</comment>
<comment type="catalytic activity">
    <reaction evidence="1">
        <text>(Z)-2-methylureidoacrylate + H2O + H(+) = (Z)-2-methylaminoacrylate + NH4(+) + CO2</text>
        <dbReference type="Rhea" id="RHEA:42620"/>
        <dbReference type="ChEBI" id="CHEBI:15377"/>
        <dbReference type="ChEBI" id="CHEBI:15378"/>
        <dbReference type="ChEBI" id="CHEBI:16526"/>
        <dbReference type="ChEBI" id="CHEBI:28938"/>
        <dbReference type="ChEBI" id="CHEBI:143783"/>
        <dbReference type="ChEBI" id="CHEBI:145735"/>
        <dbReference type="EC" id="3.5.1.110"/>
    </reaction>
</comment>
<comment type="induction">
    <text evidence="1">Up-regulated by the nitrogen regulatory protein C (NtrC also called GlnG) and repressed by RutR.</text>
</comment>
<comment type="similarity">
    <text evidence="1">Belongs to the isochorismatase family. RutB subfamily.</text>
</comment>
<protein>
    <recommendedName>
        <fullName evidence="1">Ureidoacrylate amidohydrolase RutB</fullName>
        <ecNumber evidence="1">3.5.1.110</ecNumber>
    </recommendedName>
</protein>
<keyword id="KW-0378">Hydrolase</keyword>
<feature type="chain" id="PRO_0000402678" description="Ureidoacrylate amidohydrolase RutB">
    <location>
        <begin position="1"/>
        <end position="230"/>
    </location>
</feature>
<feature type="active site" description="Proton acceptor" evidence="1">
    <location>
        <position position="24"/>
    </location>
</feature>
<feature type="active site" evidence="1">
    <location>
        <position position="133"/>
    </location>
</feature>
<feature type="active site" description="Nucleophile" evidence="1">
    <location>
        <position position="166"/>
    </location>
</feature>
<sequence>MTILTARPEAITFDPQQSALIVVDMQNAYATPGGYLDLAGFDVSTTRPVIANIQTAVTAARAAGMLIIWFQNGWDEQYVEAGGPGSPNFHKSNALKTMRKQPQLQGKLLAKGSWDYQLVDELVPQPGDIVLPKPRYSGFFNTPLDSILRSRGIRHLVFTGIATNVCVESTLRDGFFLEYFGVVLEDATHQAGPEFAQKAALFNIETFFGWVSDVETFCDALSPTSFARIA</sequence>